<name>CITG_STRP1</name>
<dbReference type="EC" id="2.4.2.52"/>
<dbReference type="EMBL" id="AE004092">
    <property type="protein sequence ID" value="AAK34045.1"/>
    <property type="molecule type" value="Genomic_DNA"/>
</dbReference>
<dbReference type="EMBL" id="CP000017">
    <property type="protein sequence ID" value="AAZ51516.1"/>
    <property type="molecule type" value="Genomic_DNA"/>
</dbReference>
<dbReference type="RefSeq" id="NP_269324.1">
    <property type="nucleotide sequence ID" value="NC_002737.2"/>
</dbReference>
<dbReference type="KEGG" id="spy:SPy_1178"/>
<dbReference type="KEGG" id="spz:M5005_Spy0898"/>
<dbReference type="PATRIC" id="fig|160490.10.peg.1029"/>
<dbReference type="HOGENOM" id="CLU_056179_1_0_9"/>
<dbReference type="OMA" id="ACEQAMY"/>
<dbReference type="Proteomes" id="UP000000750">
    <property type="component" value="Chromosome"/>
</dbReference>
<dbReference type="GO" id="GO:0005524">
    <property type="term" value="F:ATP binding"/>
    <property type="evidence" value="ECO:0007669"/>
    <property type="project" value="UniProtKB-KW"/>
</dbReference>
<dbReference type="GO" id="GO:0046917">
    <property type="term" value="F:triphosphoribosyl-dephospho-CoA synthase activity"/>
    <property type="evidence" value="ECO:0007669"/>
    <property type="project" value="UniProtKB-UniRule"/>
</dbReference>
<dbReference type="GO" id="GO:0051191">
    <property type="term" value="P:prosthetic group biosynthetic process"/>
    <property type="evidence" value="ECO:0007669"/>
    <property type="project" value="TreeGrafter"/>
</dbReference>
<dbReference type="Gene3D" id="1.10.4200.10">
    <property type="entry name" value="Triphosphoribosyl-dephospho-CoA protein"/>
    <property type="match status" value="1"/>
</dbReference>
<dbReference type="HAMAP" id="MF_00397">
    <property type="entry name" value="CitG"/>
    <property type="match status" value="1"/>
</dbReference>
<dbReference type="InterPro" id="IPR002736">
    <property type="entry name" value="CitG"/>
</dbReference>
<dbReference type="InterPro" id="IPR017551">
    <property type="entry name" value="TriPribosyl-deP-CoA_syn_CitG"/>
</dbReference>
<dbReference type="NCBIfam" id="TIGR03125">
    <property type="entry name" value="citrate_citG"/>
    <property type="match status" value="1"/>
</dbReference>
<dbReference type="PANTHER" id="PTHR30201:SF2">
    <property type="entry name" value="2-(5''-TRIPHOSPHORIBOSYL)-3'-DEPHOSPHOCOENZYME-A SYNTHASE"/>
    <property type="match status" value="1"/>
</dbReference>
<dbReference type="PANTHER" id="PTHR30201">
    <property type="entry name" value="TRIPHOSPHORIBOSYL-DEPHOSPHO-COA SYNTHASE"/>
    <property type="match status" value="1"/>
</dbReference>
<dbReference type="Pfam" id="PF01874">
    <property type="entry name" value="CitG"/>
    <property type="match status" value="1"/>
</dbReference>
<organism>
    <name type="scientific">Streptococcus pyogenes serotype M1</name>
    <dbReference type="NCBI Taxonomy" id="301447"/>
    <lineage>
        <taxon>Bacteria</taxon>
        <taxon>Bacillati</taxon>
        <taxon>Bacillota</taxon>
        <taxon>Bacilli</taxon>
        <taxon>Lactobacillales</taxon>
        <taxon>Streptococcaceae</taxon>
        <taxon>Streptococcus</taxon>
    </lineage>
</organism>
<comment type="catalytic activity">
    <reaction>
        <text>3'-dephospho-CoA + ATP = 2'-(5''-triphospho-alpha-D-ribosyl)-3'-dephospho-CoA + adenine</text>
        <dbReference type="Rhea" id="RHEA:15117"/>
        <dbReference type="ChEBI" id="CHEBI:16708"/>
        <dbReference type="ChEBI" id="CHEBI:30616"/>
        <dbReference type="ChEBI" id="CHEBI:57328"/>
        <dbReference type="ChEBI" id="CHEBI:61378"/>
        <dbReference type="EC" id="2.4.2.52"/>
    </reaction>
</comment>
<comment type="similarity">
    <text evidence="1">Belongs to the CitG/MdcB family.</text>
</comment>
<keyword id="KW-0067">ATP-binding</keyword>
<keyword id="KW-0547">Nucleotide-binding</keyword>
<keyword id="KW-1185">Reference proteome</keyword>
<keyword id="KW-0808">Transferase</keyword>
<feature type="chain" id="PRO_0000214677" description="Probable 2-(5''-triphosphoribosyl)-3'-dephosphocoenzyme-A synthase">
    <location>
        <begin position="1"/>
        <end position="294"/>
    </location>
</feature>
<protein>
    <recommendedName>
        <fullName>Probable 2-(5''-triphosphoribosyl)-3'-dephosphocoenzyme-A synthase</fullName>
        <shortName>2-(5''-triphosphoribosyl)-3'-dephospho-CoA synthase</shortName>
        <ecNumber>2.4.2.52</ecNumber>
    </recommendedName>
</protein>
<gene>
    <name type="primary">citG</name>
    <name type="ordered locus">SPy_1178</name>
    <name type="ordered locus">M5005_Spy0898</name>
</gene>
<proteinExistence type="inferred from homology"/>
<reference key="1">
    <citation type="journal article" date="2001" name="Proc. Natl. Acad. Sci. U.S.A.">
        <title>Complete genome sequence of an M1 strain of Streptococcus pyogenes.</title>
        <authorList>
            <person name="Ferretti J.J."/>
            <person name="McShan W.M."/>
            <person name="Ajdic D.J."/>
            <person name="Savic D.J."/>
            <person name="Savic G."/>
            <person name="Lyon K."/>
            <person name="Primeaux C."/>
            <person name="Sezate S."/>
            <person name="Suvorov A.N."/>
            <person name="Kenton S."/>
            <person name="Lai H.S."/>
            <person name="Lin S.P."/>
            <person name="Qian Y."/>
            <person name="Jia H.G."/>
            <person name="Najar F.Z."/>
            <person name="Ren Q."/>
            <person name="Zhu H."/>
            <person name="Song L."/>
            <person name="White J."/>
            <person name="Yuan X."/>
            <person name="Clifton S.W."/>
            <person name="Roe B.A."/>
            <person name="McLaughlin R.E."/>
        </authorList>
    </citation>
    <scope>NUCLEOTIDE SEQUENCE [LARGE SCALE GENOMIC DNA]</scope>
    <source>
        <strain>ATCC 700294 / SF370 / Serotype M1</strain>
    </source>
</reference>
<reference key="2">
    <citation type="journal article" date="2005" name="J. Infect. Dis.">
        <title>Evolutionary origin and emergence of a highly successful clone of serotype M1 group A Streptococcus involved multiple horizontal gene transfer events.</title>
        <authorList>
            <person name="Sumby P."/>
            <person name="Porcella S.F."/>
            <person name="Madrigal A.G."/>
            <person name="Barbian K.D."/>
            <person name="Virtaneva K."/>
            <person name="Ricklefs S.M."/>
            <person name="Sturdevant D.E."/>
            <person name="Graham M.R."/>
            <person name="Vuopio-Varkila J."/>
            <person name="Hoe N.P."/>
            <person name="Musser J.M."/>
        </authorList>
    </citation>
    <scope>NUCLEOTIDE SEQUENCE [LARGE SCALE GENOMIC DNA]</scope>
    <source>
        <strain>ATCC BAA-947 / MGAS5005 / Serotype M1</strain>
    </source>
</reference>
<evidence type="ECO:0000305" key="1"/>
<sequence>MTKAVLTSISQLALKALLYEVSLSPKPGLVDRFDNGAHDDMSFITFIDSMIALSPFFQAYIETGFAYAKEEPLLLFNRLRQLGQKAEETMFCATQGINTHKGLNFSMALLLGATGAYLARTPHLMTDLGRFSKEDTLAICRLVKPMTAHLIQTDLGHLNTKKEFTYGEQLFVTYGIKGPRGEASEGFTTLTDHALPYFRQMISQNDPETSQLRLLVYLMSIVEDGNLIHRGGIEAWKGVKADMRLLLQQDLSTTDLRLALSSYNQCLINQHLSPGGAADLLALTFYFAFLEKLL</sequence>
<accession>P58159</accession>
<accession>Q48YQ6</accession>